<dbReference type="EC" id="2.7.7.6"/>
<dbReference type="EMBL" id="DQ630521">
    <property type="protein sequence ID" value="ABF60214.1"/>
    <property type="molecule type" value="Genomic_DNA"/>
</dbReference>
<dbReference type="RefSeq" id="YP_764419.1">
    <property type="nucleotide sequence ID" value="NC_008372.1"/>
</dbReference>
<dbReference type="SMR" id="Q06SE7"/>
<dbReference type="GeneID" id="4308442"/>
<dbReference type="GO" id="GO:0009507">
    <property type="term" value="C:chloroplast"/>
    <property type="evidence" value="ECO:0007669"/>
    <property type="project" value="UniProtKB-SubCell"/>
</dbReference>
<dbReference type="GO" id="GO:0000428">
    <property type="term" value="C:DNA-directed RNA polymerase complex"/>
    <property type="evidence" value="ECO:0007669"/>
    <property type="project" value="UniProtKB-KW"/>
</dbReference>
<dbReference type="GO" id="GO:0005739">
    <property type="term" value="C:mitochondrion"/>
    <property type="evidence" value="ECO:0007669"/>
    <property type="project" value="GOC"/>
</dbReference>
<dbReference type="GO" id="GO:0003677">
    <property type="term" value="F:DNA binding"/>
    <property type="evidence" value="ECO:0007669"/>
    <property type="project" value="InterPro"/>
</dbReference>
<dbReference type="GO" id="GO:0003899">
    <property type="term" value="F:DNA-directed RNA polymerase activity"/>
    <property type="evidence" value="ECO:0007669"/>
    <property type="project" value="UniProtKB-EC"/>
</dbReference>
<dbReference type="GO" id="GO:0032549">
    <property type="term" value="F:ribonucleoside binding"/>
    <property type="evidence" value="ECO:0007669"/>
    <property type="project" value="InterPro"/>
</dbReference>
<dbReference type="GO" id="GO:0006351">
    <property type="term" value="P:DNA-templated transcription"/>
    <property type="evidence" value="ECO:0007669"/>
    <property type="project" value="InterPro"/>
</dbReference>
<dbReference type="Gene3D" id="3.90.1100.10">
    <property type="match status" value="2"/>
</dbReference>
<dbReference type="Gene3D" id="2.30.150.10">
    <property type="entry name" value="DNA-directed RNA polymerase, beta subunit, external 1 domain"/>
    <property type="match status" value="1"/>
</dbReference>
<dbReference type="Gene3D" id="3.90.1110.10">
    <property type="entry name" value="RNA polymerase Rpb2, domain 2"/>
    <property type="match status" value="1"/>
</dbReference>
<dbReference type="InterPro" id="IPR042107">
    <property type="entry name" value="DNA-dir_RNA_pol_bsu_ext_1_sf"/>
</dbReference>
<dbReference type="InterPro" id="IPR019462">
    <property type="entry name" value="DNA-dir_RNA_pol_bsu_external_1"/>
</dbReference>
<dbReference type="InterPro" id="IPR015712">
    <property type="entry name" value="DNA-dir_RNA_pol_su2"/>
</dbReference>
<dbReference type="InterPro" id="IPR007642">
    <property type="entry name" value="RNA_pol_Rpb2_2"/>
</dbReference>
<dbReference type="InterPro" id="IPR037034">
    <property type="entry name" value="RNA_pol_Rpb2_2_sf"/>
</dbReference>
<dbReference type="InterPro" id="IPR007645">
    <property type="entry name" value="RNA_pol_Rpb2_3"/>
</dbReference>
<dbReference type="PANTHER" id="PTHR20856">
    <property type="entry name" value="DNA-DIRECTED RNA POLYMERASE I SUBUNIT 2"/>
    <property type="match status" value="1"/>
</dbReference>
<dbReference type="Pfam" id="PF04561">
    <property type="entry name" value="RNA_pol_Rpb2_2"/>
    <property type="match status" value="2"/>
</dbReference>
<dbReference type="Pfam" id="PF04565">
    <property type="entry name" value="RNA_pol_Rpb2_3"/>
    <property type="match status" value="1"/>
</dbReference>
<dbReference type="Pfam" id="PF10385">
    <property type="entry name" value="RNA_pol_Rpb2_45"/>
    <property type="match status" value="1"/>
</dbReference>
<dbReference type="SUPFAM" id="SSF64484">
    <property type="entry name" value="beta and beta-prime subunits of DNA dependent RNA-polymerase"/>
    <property type="match status" value="1"/>
</dbReference>
<reference key="1">
    <citation type="journal article" date="2006" name="Mol. Genet. Genomics">
        <title>Distinctive architecture of the chloroplast genome in the chlorophycean green alga Stigeoclonium helveticum.</title>
        <authorList>
            <person name="Belanger A.-S."/>
            <person name="Brouard J.-S."/>
            <person name="Charlebois P."/>
            <person name="Otis C."/>
            <person name="Lemieux C."/>
            <person name="Turmel M."/>
        </authorList>
    </citation>
    <scope>NUCLEOTIDE SEQUENCE [LARGE SCALE GENOMIC DNA]</scope>
    <source>
        <strain>UTEX 441</strain>
    </source>
</reference>
<accession>Q06SE7</accession>
<keyword id="KW-0150">Chloroplast</keyword>
<keyword id="KW-0240">DNA-directed RNA polymerase</keyword>
<keyword id="KW-0548">Nucleotidyltransferase</keyword>
<keyword id="KW-0934">Plastid</keyword>
<keyword id="KW-0804">Transcription</keyword>
<keyword id="KW-0808">Transferase</keyword>
<proteinExistence type="inferred from homology"/>
<sequence length="696" mass="79536">MAIEKYFIPDFVELQRRSFQRFLETGLIEELNKRNPITNSQKDLEILLYPEYYKLAPPRWNSLDAILLSKTYSCRLYVPAQLTNRKTKQIMFKWVQLGDIPLMSKRGHFVVNGAARVIINQIVRGPGLYFSEIQYNVDSSKKTLVRRYAAEFISMRGTWLRLSIDKEKMIWAELKKTPKIPLVWFLLGMGLTEKILFQSLTQPKRLLYNYLDYLKIDNLAIDVKSQNDAFAKRALLRELLLKSKLNSSNIKTLKNSKDFKPLLLVNDIYSEMHSYKEKENRRYPLNSQNGDLADEKEKIPYYANSSLKALELIYSKITNTKKITNLNKKFFAKQGQKWIFKKFMNPRTYDLGLHGRLSLNKKLSLSLPLSQRTLTMYDVLVATEHLLRVEQGLLGTDDIDNLKNRRVRTSSDLIQMQIGIGLLRLEKNIRSKFTTIKGVPKINYFFSTKPLNGALKEFFGTNPLSQFMDMINPLAEMTHKRRLTTLGPGGVSRDTATMDIRGIHPTHYGRICPVETPEGKNAGLVNALTTFARVNPEGLIETPFYKVYKGQVQKKAGFFYLSAEKEEKAIIAAGDLNLSKTGFLPKGLIPVRKFDEFTKVLRNYVDFMSVSPLQMISVATSLVPFLEHDDANRALMGANMQRQAVPLVRSEQAIVGTGIETRIASDSGHVIRAKAGGLVGYVSGQKIRIYTFVSNF</sequence>
<organism>
    <name type="scientific">Stigeoclonium helveticum</name>
    <name type="common">Green alga</name>
    <dbReference type="NCBI Taxonomy" id="55999"/>
    <lineage>
        <taxon>Eukaryota</taxon>
        <taxon>Viridiplantae</taxon>
        <taxon>Chlorophyta</taxon>
        <taxon>core chlorophytes</taxon>
        <taxon>Chlorophyceae</taxon>
        <taxon>OCC clade</taxon>
        <taxon>Chaetophorales</taxon>
        <taxon>Chaetophoraceae</taxon>
        <taxon>Stigeoclonium</taxon>
    </lineage>
</organism>
<gene>
    <name type="primary">rpoB1</name>
    <name type="synonym">rpoBa</name>
</gene>
<feature type="chain" id="PRO_0000308261" description="DNA-directed RNA polymerase subunit beta N-terminal section">
    <location>
        <begin position="1"/>
        <end position="696"/>
    </location>
</feature>
<geneLocation type="chloroplast"/>
<evidence type="ECO:0000250" key="1"/>
<evidence type="ECO:0000305" key="2"/>
<name>RPOB1_STIHE</name>
<comment type="function">
    <text evidence="1">DNA-dependent RNA polymerase catalyzes the transcription of DNA into RNA using the four ribonucleoside triphosphates as substrates.</text>
</comment>
<comment type="catalytic activity">
    <reaction>
        <text>RNA(n) + a ribonucleoside 5'-triphosphate = RNA(n+1) + diphosphate</text>
        <dbReference type="Rhea" id="RHEA:21248"/>
        <dbReference type="Rhea" id="RHEA-COMP:14527"/>
        <dbReference type="Rhea" id="RHEA-COMP:17342"/>
        <dbReference type="ChEBI" id="CHEBI:33019"/>
        <dbReference type="ChEBI" id="CHEBI:61557"/>
        <dbReference type="ChEBI" id="CHEBI:140395"/>
        <dbReference type="EC" id="2.7.7.6"/>
    </reaction>
</comment>
<comment type="subunit">
    <text evidence="1">In plastids the minimal PEP RNA polymerase catalytic core is composed of four subunits: alpha, beta, beta', and beta''. When a (nuclear-encoded) sigma factor is associated with the core the holoenzyme is formed, which can initiate transcription (By similarity).</text>
</comment>
<comment type="subcellular location">
    <subcellularLocation>
        <location>Plastid</location>
        <location>Chloroplast</location>
    </subcellularLocation>
</comment>
<comment type="miscellaneous">
    <text>In S.helveticum the gene for this protein is split in two.</text>
</comment>
<comment type="similarity">
    <text evidence="2">Belongs to the RNA polymerase beta chain family.</text>
</comment>
<protein>
    <recommendedName>
        <fullName>DNA-directed RNA polymerase subunit beta N-terminal section</fullName>
        <ecNumber>2.7.7.6</ecNumber>
    </recommendedName>
    <alternativeName>
        <fullName>PEP</fullName>
    </alternativeName>
    <alternativeName>
        <fullName>Plastid-encoded RNA polymerase subunit beta N-terminal section</fullName>
        <shortName>RNA polymerase subunit beta N-terminal section</shortName>
    </alternativeName>
</protein>